<dbReference type="EMBL" id="CP000230">
    <property type="protein sequence ID" value="ABC24404.1"/>
    <property type="molecule type" value="Genomic_DNA"/>
</dbReference>
<dbReference type="RefSeq" id="WP_011391357.1">
    <property type="nucleotide sequence ID" value="NC_007643.1"/>
</dbReference>
<dbReference type="RefSeq" id="YP_428691.1">
    <property type="nucleotide sequence ID" value="NC_007643.1"/>
</dbReference>
<dbReference type="SMR" id="Q2RN91"/>
<dbReference type="STRING" id="269796.Rru_A3610"/>
<dbReference type="EnsemblBacteria" id="ABC24404">
    <property type="protein sequence ID" value="ABC24404"/>
    <property type="gene ID" value="Rru_A3610"/>
</dbReference>
<dbReference type="KEGG" id="rru:Rru_A3610"/>
<dbReference type="PATRIC" id="fig|269796.9.peg.3731"/>
<dbReference type="eggNOG" id="COG1952">
    <property type="taxonomic scope" value="Bacteria"/>
</dbReference>
<dbReference type="HOGENOM" id="CLU_111574_0_0_5"/>
<dbReference type="PhylomeDB" id="Q2RN91"/>
<dbReference type="Proteomes" id="UP000001929">
    <property type="component" value="Chromosome"/>
</dbReference>
<dbReference type="GO" id="GO:0005737">
    <property type="term" value="C:cytoplasm"/>
    <property type="evidence" value="ECO:0007669"/>
    <property type="project" value="UniProtKB-SubCell"/>
</dbReference>
<dbReference type="GO" id="GO:0051082">
    <property type="term" value="F:unfolded protein binding"/>
    <property type="evidence" value="ECO:0007669"/>
    <property type="project" value="InterPro"/>
</dbReference>
<dbReference type="GO" id="GO:0006457">
    <property type="term" value="P:protein folding"/>
    <property type="evidence" value="ECO:0007669"/>
    <property type="project" value="UniProtKB-UniRule"/>
</dbReference>
<dbReference type="GO" id="GO:0051262">
    <property type="term" value="P:protein tetramerization"/>
    <property type="evidence" value="ECO:0007669"/>
    <property type="project" value="InterPro"/>
</dbReference>
<dbReference type="GO" id="GO:0015031">
    <property type="term" value="P:protein transport"/>
    <property type="evidence" value="ECO:0007669"/>
    <property type="project" value="UniProtKB-UniRule"/>
</dbReference>
<dbReference type="Gene3D" id="3.10.420.10">
    <property type="entry name" value="SecB-like"/>
    <property type="match status" value="1"/>
</dbReference>
<dbReference type="HAMAP" id="MF_00821">
    <property type="entry name" value="SecB"/>
    <property type="match status" value="1"/>
</dbReference>
<dbReference type="InterPro" id="IPR003708">
    <property type="entry name" value="SecB"/>
</dbReference>
<dbReference type="InterPro" id="IPR035958">
    <property type="entry name" value="SecB-like_sf"/>
</dbReference>
<dbReference type="NCBIfam" id="NF004392">
    <property type="entry name" value="PRK05751.1-3"/>
    <property type="match status" value="1"/>
</dbReference>
<dbReference type="NCBIfam" id="TIGR00809">
    <property type="entry name" value="secB"/>
    <property type="match status" value="1"/>
</dbReference>
<dbReference type="PANTHER" id="PTHR36918">
    <property type="match status" value="1"/>
</dbReference>
<dbReference type="PANTHER" id="PTHR36918:SF1">
    <property type="entry name" value="PROTEIN-EXPORT PROTEIN SECB"/>
    <property type="match status" value="1"/>
</dbReference>
<dbReference type="Pfam" id="PF02556">
    <property type="entry name" value="SecB"/>
    <property type="match status" value="1"/>
</dbReference>
<dbReference type="PRINTS" id="PR01594">
    <property type="entry name" value="SECBCHAPRONE"/>
</dbReference>
<dbReference type="SUPFAM" id="SSF54611">
    <property type="entry name" value="SecB-like"/>
    <property type="match status" value="1"/>
</dbReference>
<keyword id="KW-0143">Chaperone</keyword>
<keyword id="KW-0963">Cytoplasm</keyword>
<keyword id="KW-0653">Protein transport</keyword>
<keyword id="KW-1185">Reference proteome</keyword>
<keyword id="KW-0811">Translocation</keyword>
<keyword id="KW-0813">Transport</keyword>
<comment type="function">
    <text evidence="1">One of the proteins required for the normal export of preproteins out of the cell cytoplasm. It is a molecular chaperone that binds to a subset of precursor proteins, maintaining them in a translocation-competent state. It also specifically binds to its receptor SecA.</text>
</comment>
<comment type="subunit">
    <text evidence="1">Homotetramer, a dimer of dimers. One homotetramer interacts with 1 SecA dimer.</text>
</comment>
<comment type="subcellular location">
    <subcellularLocation>
        <location evidence="1">Cytoplasm</location>
    </subcellularLocation>
</comment>
<comment type="similarity">
    <text evidence="1">Belongs to the SecB family.</text>
</comment>
<sequence length="160" mass="17550">MSDETATPGADQAPLIINGQYIKDLSFEVPNAPRIFAELDGQPEVPINVDVTATPVGERFFEVSLKFRIEGRIKGKVAFIAELDYCAVATVNLPDEHIHPVLLIEVPRLMFPFARNILADLTRDGGFLPLMIQPLDFAAMYRNRVQAAQSQAAAENAAAN</sequence>
<protein>
    <recommendedName>
        <fullName evidence="1">Protein-export protein SecB</fullName>
    </recommendedName>
</protein>
<evidence type="ECO:0000255" key="1">
    <source>
        <dbReference type="HAMAP-Rule" id="MF_00821"/>
    </source>
</evidence>
<reference key="1">
    <citation type="journal article" date="2011" name="Stand. Genomic Sci.">
        <title>Complete genome sequence of Rhodospirillum rubrum type strain (S1).</title>
        <authorList>
            <person name="Munk A.C."/>
            <person name="Copeland A."/>
            <person name="Lucas S."/>
            <person name="Lapidus A."/>
            <person name="Del Rio T.G."/>
            <person name="Barry K."/>
            <person name="Detter J.C."/>
            <person name="Hammon N."/>
            <person name="Israni S."/>
            <person name="Pitluck S."/>
            <person name="Brettin T."/>
            <person name="Bruce D."/>
            <person name="Han C."/>
            <person name="Tapia R."/>
            <person name="Gilna P."/>
            <person name="Schmutz J."/>
            <person name="Larimer F."/>
            <person name="Land M."/>
            <person name="Kyrpides N.C."/>
            <person name="Mavromatis K."/>
            <person name="Richardson P."/>
            <person name="Rohde M."/>
            <person name="Goeker M."/>
            <person name="Klenk H.P."/>
            <person name="Zhang Y."/>
            <person name="Roberts G.P."/>
            <person name="Reslewic S."/>
            <person name="Schwartz D.C."/>
        </authorList>
    </citation>
    <scope>NUCLEOTIDE SEQUENCE [LARGE SCALE GENOMIC DNA]</scope>
    <source>
        <strain>ATCC 11170 / ATH 1.1.1 / DSM 467 / LMG 4362 / NCIMB 8255 / S1</strain>
    </source>
</reference>
<name>SECB_RHORT</name>
<accession>Q2RN91</accession>
<gene>
    <name evidence="1" type="primary">secB</name>
    <name type="ordered locus">Rru_A3610</name>
</gene>
<organism>
    <name type="scientific">Rhodospirillum rubrum (strain ATCC 11170 / ATH 1.1.1 / DSM 467 / LMG 4362 / NCIMB 8255 / S1)</name>
    <dbReference type="NCBI Taxonomy" id="269796"/>
    <lineage>
        <taxon>Bacteria</taxon>
        <taxon>Pseudomonadati</taxon>
        <taxon>Pseudomonadota</taxon>
        <taxon>Alphaproteobacteria</taxon>
        <taxon>Rhodospirillales</taxon>
        <taxon>Rhodospirillaceae</taxon>
        <taxon>Rhodospirillum</taxon>
    </lineage>
</organism>
<feature type="chain" id="PRO_0000318261" description="Protein-export protein SecB">
    <location>
        <begin position="1"/>
        <end position="160"/>
    </location>
</feature>
<proteinExistence type="inferred from homology"/>